<proteinExistence type="evidence at transcript level"/>
<protein>
    <recommendedName>
        <fullName evidence="1">NADPH--cytochrome P450 reductase</fullName>
        <shortName evidence="1">CPR</shortName>
        <shortName evidence="1">P450R</shortName>
        <ecNumber evidence="1">1.6.2.4</ecNumber>
    </recommendedName>
</protein>
<gene>
    <name evidence="1" type="primary">cprA</name>
    <name type="ORF">An08g07840</name>
</gene>
<comment type="function">
    <text evidence="1">This enzyme is required for electron transfer from NADP to cytochrome P450 in microsomes. It can also provide electron transfer to heme oxygenase and cytochrome B5. Involved in ergosterol biosynthesis.</text>
</comment>
<comment type="catalytic activity">
    <reaction evidence="1">
        <text>2 oxidized [cytochrome P450] + NADPH = 2 reduced [cytochrome P450] + NADP(+) + H(+)</text>
        <dbReference type="Rhea" id="RHEA:24040"/>
        <dbReference type="Rhea" id="RHEA-COMP:14627"/>
        <dbReference type="Rhea" id="RHEA-COMP:14628"/>
        <dbReference type="ChEBI" id="CHEBI:15378"/>
        <dbReference type="ChEBI" id="CHEBI:55376"/>
        <dbReference type="ChEBI" id="CHEBI:57783"/>
        <dbReference type="ChEBI" id="CHEBI:58349"/>
        <dbReference type="ChEBI" id="CHEBI:60344"/>
        <dbReference type="EC" id="1.6.2.4"/>
    </reaction>
</comment>
<comment type="cofactor">
    <cofactor evidence="1">
        <name>FAD</name>
        <dbReference type="ChEBI" id="CHEBI:57692"/>
    </cofactor>
    <text evidence="1">Binds 1 FAD per monomer.</text>
</comment>
<comment type="cofactor">
    <cofactor evidence="1">
        <name>FMN</name>
        <dbReference type="ChEBI" id="CHEBI:58210"/>
    </cofactor>
    <text evidence="1">Binds 1 FMN per monomer.</text>
</comment>
<comment type="subcellular location">
    <subcellularLocation>
        <location evidence="1">Endoplasmic reticulum membrane</location>
        <topology evidence="1">Single-pass membrane protein</topology>
        <orientation evidence="1">Cytoplasmic side</orientation>
    </subcellularLocation>
    <subcellularLocation>
        <location evidence="1">Mitochondrion outer membrane</location>
        <topology evidence="1">Single-pass membrane protein</topology>
        <orientation evidence="1">Cytoplasmic side</orientation>
    </subcellularLocation>
    <subcellularLocation>
        <location evidence="1">Cell membrane</location>
        <topology evidence="1">Single-pass membrane protein</topology>
        <orientation evidence="1">Cytoplasmic side</orientation>
    </subcellularLocation>
</comment>
<comment type="induction">
    <text evidence="2 3">Expression is induced in the presence of benzoic acid (PubMed:10852481, Ref.3). Expression regulation is particularly complex, involving regulatory promoter elements, differential promoter use and regulation at the post-transcriptional level (PubMed:10852481).</text>
</comment>
<comment type="similarity">
    <text evidence="1">Belongs to the NADPH--cytochrome P450 reductase family.</text>
</comment>
<comment type="similarity">
    <text evidence="1">In the N-terminal section; belongs to the flavodoxin family.</text>
</comment>
<comment type="similarity">
    <text evidence="1">In the C-terminal section; belongs to the flavoprotein pyridine nucleotide cytochrome reductase family.</text>
</comment>
<organism>
    <name type="scientific">Aspergillus niger (strain ATCC MYA-4892 / CBS 513.88 / FGSC A1513)</name>
    <dbReference type="NCBI Taxonomy" id="425011"/>
    <lineage>
        <taxon>Eukaryota</taxon>
        <taxon>Fungi</taxon>
        <taxon>Dikarya</taxon>
        <taxon>Ascomycota</taxon>
        <taxon>Pezizomycotina</taxon>
        <taxon>Eurotiomycetes</taxon>
        <taxon>Eurotiomycetidae</taxon>
        <taxon>Eurotiales</taxon>
        <taxon>Aspergillaceae</taxon>
        <taxon>Aspergillus</taxon>
        <taxon>Aspergillus subgen. Circumdati</taxon>
    </lineage>
</organism>
<keyword id="KW-1003">Cell membrane</keyword>
<keyword id="KW-0256">Endoplasmic reticulum</keyword>
<keyword id="KW-0274">FAD</keyword>
<keyword id="KW-0285">Flavoprotein</keyword>
<keyword id="KW-0288">FMN</keyword>
<keyword id="KW-0444">Lipid biosynthesis</keyword>
<keyword id="KW-0443">Lipid metabolism</keyword>
<keyword id="KW-0472">Membrane</keyword>
<keyword id="KW-0496">Mitochondrion</keyword>
<keyword id="KW-1000">Mitochondrion outer membrane</keyword>
<keyword id="KW-0521">NADP</keyword>
<keyword id="KW-0560">Oxidoreductase</keyword>
<keyword id="KW-1185">Reference proteome</keyword>
<keyword id="KW-0752">Steroid biosynthesis</keyword>
<keyword id="KW-0753">Steroid metabolism</keyword>
<keyword id="KW-0756">Sterol biosynthesis</keyword>
<keyword id="KW-1207">Sterol metabolism</keyword>
<keyword id="KW-0812">Transmembrane</keyword>
<keyword id="KW-1133">Transmembrane helix</keyword>
<evidence type="ECO:0000255" key="1">
    <source>
        <dbReference type="HAMAP-Rule" id="MF_03212"/>
    </source>
</evidence>
<evidence type="ECO:0000269" key="2">
    <source>
    </source>
</evidence>
<evidence type="ECO:0000269" key="3">
    <source ref="3"/>
</evidence>
<evidence type="ECO:0000312" key="4">
    <source>
        <dbReference type="EMBL" id="CAK45677.1"/>
    </source>
</evidence>
<sequence>MAQLDTLDLVVLAVLLVGSVAYFTKGTYWAVAKDPYASTGPAMNGAAKAGKTRNIIEKMEETGKNCVIFYGSQTGTAEDYASRLAKEGSQRFGLKTMVADLEEYDYENLDQFPEDKVAFFVLATYGEGEPTDNAVEFYQFFTGDDVAFESGASADEKPLSKLKYVAFGLGNNTYEHYNAMVRQVDAAFQKLGAQRIGSAGEGDDGAGTMEEDFLAWKEPMWAALSESMDLQEREAVYEPVFCVTENESLSPEDETVYLGEPTQSHLQGTPKGPYSAHNPFIAPIAESRELFTVKDRNCLHMEISIAGSNLSYQTGDHIAVWPTNAGAEVDRFLQVFGLEGKRDSVINIKGIDVTAKVPIPTPTTYDAAVRYYMEVCAPVSRQFVATLAAFAPDEESKAEIVRLGSDKDYFHEKVTNQCFNIAQALQSITSKPFSAVPFSLLIEGITKLQPRYYSISSSSLVQKDKISITAVVESVRLPGASHMVKGVTTNYLLALKQKQNGDPSPDPHGLTYSITGPRNKYDGIHVPVHVRHSNFKLPSDPSRPIIMVGPGTGVAPFRGFIQERAALAAKGEKVGPTVLFFGCRKSDEDFLYKDEWKTYQDQLGDNLKIITAFSREGPQKVYVQHRLREHSELVSDLLKQKATFYVCGDAANMAREVNLVLGQIIAAQRGLPAEKGEEMVKHMRSSGSYQEDVWS</sequence>
<accession>A2QS05</accession>
<reference evidence="4" key="1">
    <citation type="journal article" date="2007" name="Nat. Biotechnol.">
        <title>Genome sequencing and analysis of the versatile cell factory Aspergillus niger CBS 513.88.</title>
        <authorList>
            <person name="Pel H.J."/>
            <person name="de Winde J.H."/>
            <person name="Archer D.B."/>
            <person name="Dyer P.S."/>
            <person name="Hofmann G."/>
            <person name="Schaap P.J."/>
            <person name="Turner G."/>
            <person name="de Vries R.P."/>
            <person name="Albang R."/>
            <person name="Albermann K."/>
            <person name="Andersen M.R."/>
            <person name="Bendtsen J.D."/>
            <person name="Benen J.A.E."/>
            <person name="van den Berg M."/>
            <person name="Breestraat S."/>
            <person name="Caddick M.X."/>
            <person name="Contreras R."/>
            <person name="Cornell M."/>
            <person name="Coutinho P.M."/>
            <person name="Danchin E.G.J."/>
            <person name="Debets A.J.M."/>
            <person name="Dekker P."/>
            <person name="van Dijck P.W.M."/>
            <person name="van Dijk A."/>
            <person name="Dijkhuizen L."/>
            <person name="Driessen A.J.M."/>
            <person name="d'Enfert C."/>
            <person name="Geysens S."/>
            <person name="Goosen C."/>
            <person name="Groot G.S.P."/>
            <person name="de Groot P.W.J."/>
            <person name="Guillemette T."/>
            <person name="Henrissat B."/>
            <person name="Herweijer M."/>
            <person name="van den Hombergh J.P.T.W."/>
            <person name="van den Hondel C.A.M.J.J."/>
            <person name="van der Heijden R.T.J.M."/>
            <person name="van der Kaaij R.M."/>
            <person name="Klis F.M."/>
            <person name="Kools H.J."/>
            <person name="Kubicek C.P."/>
            <person name="van Kuyk P.A."/>
            <person name="Lauber J."/>
            <person name="Lu X."/>
            <person name="van der Maarel M.J.E.C."/>
            <person name="Meulenberg R."/>
            <person name="Menke H."/>
            <person name="Mortimer M.A."/>
            <person name="Nielsen J."/>
            <person name="Oliver S.G."/>
            <person name="Olsthoorn M."/>
            <person name="Pal K."/>
            <person name="van Peij N.N.M.E."/>
            <person name="Ram A.F.J."/>
            <person name="Rinas U."/>
            <person name="Roubos J.A."/>
            <person name="Sagt C.M.J."/>
            <person name="Schmoll M."/>
            <person name="Sun J."/>
            <person name="Ussery D."/>
            <person name="Varga J."/>
            <person name="Vervecken W."/>
            <person name="van de Vondervoort P.J.J."/>
            <person name="Wedler H."/>
            <person name="Woesten H.A.B."/>
            <person name="Zeng A.-P."/>
            <person name="van Ooyen A.J.J."/>
            <person name="Visser J."/>
            <person name="Stam H."/>
        </authorList>
    </citation>
    <scope>NUCLEOTIDE SEQUENCE [LARGE SCALE GENOMIC DNA]</scope>
    <source>
        <strain>ATCC MYA-4892 / CBS 513.88 / FGSC A1513</strain>
    </source>
</reference>
<reference key="2">
    <citation type="journal article" date="2000" name="Mol. Gen. Genet.">
        <title>Regulation of expression of the Aspergillus niger benzoate para-hydroxylase cytochrome P450 system.</title>
        <authorList>
            <person name="van den Brink J.M."/>
            <person name="Punt P.J."/>
            <person name="van Gorcom R.F."/>
            <person name="van den Hondel C.A."/>
        </authorList>
    </citation>
    <scope>INDUCTION</scope>
</reference>
<reference key="3">
    <citation type="journal article" date="2019" name="ACS Sustain. Chem. Eng.">
        <title>Discovery of novel p-hydroxybenzoate-m-hydroxylase, protocatechuate 3,4 ring-cleavage dioxygenase, and hydroxyquinol 1,2 ring-cleavage dioxygenase from the filamentous fungus Aspergillus niger.</title>
        <authorList>
            <person name="Lubbers R.J.M."/>
            <person name="Dilokpimol A."/>
            <person name="Peng M."/>
            <person name="Visser J."/>
            <person name="Makela M.R."/>
            <person name="Hilden K.S."/>
            <person name="de Vries R.P."/>
        </authorList>
    </citation>
    <scope>INDUCTION</scope>
</reference>
<name>NCPR_ASPNC</name>
<feature type="chain" id="PRO_5000220324" description="NADPH--cytochrome P450 reductase">
    <location>
        <begin position="1"/>
        <end position="695"/>
    </location>
</feature>
<feature type="topological domain" description="Lumenal" evidence="1">
    <location>
        <begin position="1"/>
        <end position="8"/>
    </location>
</feature>
<feature type="transmembrane region" description="Helical" evidence="1">
    <location>
        <begin position="9"/>
        <end position="31"/>
    </location>
</feature>
<feature type="topological domain" description="Cytoplasmic" evidence="1">
    <location>
        <begin position="32"/>
        <end position="695"/>
    </location>
</feature>
<feature type="domain" description="Flavodoxin-like" evidence="1">
    <location>
        <begin position="66"/>
        <end position="221"/>
    </location>
</feature>
<feature type="domain" description="FAD-binding FR-type" evidence="1">
    <location>
        <begin position="277"/>
        <end position="538"/>
    </location>
</feature>
<feature type="binding site" evidence="1">
    <location>
        <begin position="72"/>
        <end position="77"/>
    </location>
    <ligand>
        <name>FMN</name>
        <dbReference type="ChEBI" id="CHEBI:58210"/>
    </ligand>
</feature>
<feature type="binding site" evidence="1">
    <location>
        <begin position="123"/>
        <end position="126"/>
    </location>
    <ligand>
        <name>FMN</name>
        <dbReference type="ChEBI" id="CHEBI:58210"/>
    </ligand>
</feature>
<feature type="binding site" evidence="1">
    <location>
        <begin position="169"/>
        <end position="178"/>
    </location>
    <ligand>
        <name>FMN</name>
        <dbReference type="ChEBI" id="CHEBI:58210"/>
    </ligand>
</feature>
<feature type="binding site" evidence="1">
    <location>
        <position position="204"/>
    </location>
    <ligand>
        <name>FMN</name>
        <dbReference type="ChEBI" id="CHEBI:58210"/>
    </ligand>
</feature>
<feature type="binding site" evidence="1">
    <location>
        <position position="296"/>
    </location>
    <ligand>
        <name>NADP(+)</name>
        <dbReference type="ChEBI" id="CHEBI:58349"/>
    </ligand>
</feature>
<feature type="binding site" evidence="1">
    <location>
        <begin position="451"/>
        <end position="454"/>
    </location>
    <ligand>
        <name>FAD</name>
        <dbReference type="ChEBI" id="CHEBI:57692"/>
    </ligand>
</feature>
<feature type="binding site" evidence="1">
    <location>
        <begin position="469"/>
        <end position="471"/>
    </location>
    <ligand>
        <name>FAD</name>
        <dbReference type="ChEBI" id="CHEBI:57692"/>
    </ligand>
</feature>
<feature type="binding site" evidence="1">
    <location>
        <begin position="486"/>
        <end position="489"/>
    </location>
    <ligand>
        <name>FAD</name>
        <dbReference type="ChEBI" id="CHEBI:57692"/>
    </ligand>
</feature>
<feature type="binding site" evidence="1">
    <location>
        <position position="552"/>
    </location>
    <ligand>
        <name>NADP(+)</name>
        <dbReference type="ChEBI" id="CHEBI:58349"/>
    </ligand>
</feature>
<feature type="binding site" evidence="1">
    <location>
        <begin position="614"/>
        <end position="615"/>
    </location>
    <ligand>
        <name>NADP(+)</name>
        <dbReference type="ChEBI" id="CHEBI:58349"/>
    </ligand>
</feature>
<feature type="binding site" evidence="1">
    <location>
        <begin position="620"/>
        <end position="624"/>
    </location>
    <ligand>
        <name>NADP(+)</name>
        <dbReference type="ChEBI" id="CHEBI:58349"/>
    </ligand>
</feature>
<feature type="binding site" evidence="1">
    <location>
        <position position="656"/>
    </location>
    <ligand>
        <name>NADP(+)</name>
        <dbReference type="ChEBI" id="CHEBI:58349"/>
    </ligand>
</feature>
<feature type="binding site" evidence="1">
    <location>
        <position position="694"/>
    </location>
    <ligand>
        <name>FAD</name>
        <dbReference type="ChEBI" id="CHEBI:57692"/>
    </ligand>
</feature>
<dbReference type="EC" id="1.6.2.4" evidence="1"/>
<dbReference type="EMBL" id="AM270176">
    <property type="protein sequence ID" value="CAK45677.1"/>
    <property type="molecule type" value="Genomic_DNA"/>
</dbReference>
<dbReference type="RefSeq" id="XP_001392901.1">
    <property type="nucleotide sequence ID" value="XM_001392864.2"/>
</dbReference>
<dbReference type="SMR" id="A2QS05"/>
<dbReference type="GeneID" id="4983103"/>
<dbReference type="KEGG" id="ang:An08g07840"/>
<dbReference type="VEuPathDB" id="FungiDB:An08g07840"/>
<dbReference type="HOGENOM" id="CLU_001570_17_3_1"/>
<dbReference type="Proteomes" id="UP000006706">
    <property type="component" value="Chromosome 8R"/>
</dbReference>
<dbReference type="GO" id="GO:0005829">
    <property type="term" value="C:cytosol"/>
    <property type="evidence" value="ECO:0007669"/>
    <property type="project" value="TreeGrafter"/>
</dbReference>
<dbReference type="GO" id="GO:0005789">
    <property type="term" value="C:endoplasmic reticulum membrane"/>
    <property type="evidence" value="ECO:0007669"/>
    <property type="project" value="UniProtKB-SubCell"/>
</dbReference>
<dbReference type="GO" id="GO:0005741">
    <property type="term" value="C:mitochondrial outer membrane"/>
    <property type="evidence" value="ECO:0007669"/>
    <property type="project" value="UniProtKB-SubCell"/>
</dbReference>
<dbReference type="GO" id="GO:0005886">
    <property type="term" value="C:plasma membrane"/>
    <property type="evidence" value="ECO:0007669"/>
    <property type="project" value="UniProtKB-SubCell"/>
</dbReference>
<dbReference type="GO" id="GO:0050660">
    <property type="term" value="F:flavin adenine dinucleotide binding"/>
    <property type="evidence" value="ECO:0007669"/>
    <property type="project" value="UniProtKB-UniRule"/>
</dbReference>
<dbReference type="GO" id="GO:0010181">
    <property type="term" value="F:FMN binding"/>
    <property type="evidence" value="ECO:0007669"/>
    <property type="project" value="UniProtKB-UniRule"/>
</dbReference>
<dbReference type="GO" id="GO:0050661">
    <property type="term" value="F:NADP binding"/>
    <property type="evidence" value="ECO:0007669"/>
    <property type="project" value="UniProtKB-UniRule"/>
</dbReference>
<dbReference type="GO" id="GO:0003958">
    <property type="term" value="F:NADPH-hemoprotein reductase activity"/>
    <property type="evidence" value="ECO:0007669"/>
    <property type="project" value="UniProtKB-UniRule"/>
</dbReference>
<dbReference type="GO" id="GO:0006696">
    <property type="term" value="P:ergosterol biosynthetic process"/>
    <property type="evidence" value="ECO:0007669"/>
    <property type="project" value="UniProtKB-UniRule"/>
</dbReference>
<dbReference type="CDD" id="cd06204">
    <property type="entry name" value="CYPOR"/>
    <property type="match status" value="1"/>
</dbReference>
<dbReference type="FunFam" id="1.20.990.10:FF:000009">
    <property type="entry name" value="NADPH--cytochrome P450 reductase"/>
    <property type="match status" value="1"/>
</dbReference>
<dbReference type="FunFam" id="2.40.30.10:FF:000100">
    <property type="entry name" value="NADPH--cytochrome P450 reductase"/>
    <property type="match status" value="1"/>
</dbReference>
<dbReference type="FunFam" id="2.40.30.10:FF:000111">
    <property type="entry name" value="NADPH--cytochrome P450 reductase"/>
    <property type="match status" value="1"/>
</dbReference>
<dbReference type="FunFam" id="3.40.50.360:FF:000024">
    <property type="entry name" value="NADPH--cytochrome P450 reductase"/>
    <property type="match status" value="1"/>
</dbReference>
<dbReference type="FunFam" id="3.40.50.80:FF:000018">
    <property type="entry name" value="NADPH--cytochrome P450 reductase"/>
    <property type="match status" value="1"/>
</dbReference>
<dbReference type="Gene3D" id="3.40.50.360">
    <property type="match status" value="1"/>
</dbReference>
<dbReference type="Gene3D" id="1.20.990.10">
    <property type="entry name" value="NADPH-cytochrome p450 Reductase, Chain A, domain 3"/>
    <property type="match status" value="1"/>
</dbReference>
<dbReference type="Gene3D" id="3.40.50.80">
    <property type="entry name" value="Nucleotide-binding domain of ferredoxin-NADP reductase (FNR) module"/>
    <property type="match status" value="1"/>
</dbReference>
<dbReference type="Gene3D" id="2.40.30.10">
    <property type="entry name" value="Translation factors"/>
    <property type="match status" value="1"/>
</dbReference>
<dbReference type="HAMAP" id="MF_03212">
    <property type="entry name" value="NCPR"/>
    <property type="match status" value="1"/>
</dbReference>
<dbReference type="InterPro" id="IPR003097">
    <property type="entry name" value="CysJ-like_FAD-binding"/>
</dbReference>
<dbReference type="InterPro" id="IPR017927">
    <property type="entry name" value="FAD-bd_FR_type"/>
</dbReference>
<dbReference type="InterPro" id="IPR001094">
    <property type="entry name" value="Flavdoxin-like"/>
</dbReference>
<dbReference type="InterPro" id="IPR008254">
    <property type="entry name" value="Flavodoxin/NO_synth"/>
</dbReference>
<dbReference type="InterPro" id="IPR001709">
    <property type="entry name" value="Flavoprot_Pyr_Nucl_cyt_Rdtase"/>
</dbReference>
<dbReference type="InterPro" id="IPR029039">
    <property type="entry name" value="Flavoprotein-like_sf"/>
</dbReference>
<dbReference type="InterPro" id="IPR039261">
    <property type="entry name" value="FNR_nucleotide-bd"/>
</dbReference>
<dbReference type="InterPro" id="IPR023173">
    <property type="entry name" value="NADPH_Cyt_P450_Rdtase_alpha"/>
</dbReference>
<dbReference type="InterPro" id="IPR001433">
    <property type="entry name" value="OxRdtase_FAD/NAD-bd"/>
</dbReference>
<dbReference type="InterPro" id="IPR023208">
    <property type="entry name" value="P450R"/>
</dbReference>
<dbReference type="InterPro" id="IPR017938">
    <property type="entry name" value="Riboflavin_synthase-like_b-brl"/>
</dbReference>
<dbReference type="PANTHER" id="PTHR19384:SF17">
    <property type="entry name" value="NADPH--CYTOCHROME P450 REDUCTASE"/>
    <property type="match status" value="1"/>
</dbReference>
<dbReference type="PANTHER" id="PTHR19384">
    <property type="entry name" value="NITRIC OXIDE SYNTHASE-RELATED"/>
    <property type="match status" value="1"/>
</dbReference>
<dbReference type="Pfam" id="PF00667">
    <property type="entry name" value="FAD_binding_1"/>
    <property type="match status" value="1"/>
</dbReference>
<dbReference type="Pfam" id="PF00258">
    <property type="entry name" value="Flavodoxin_1"/>
    <property type="match status" value="1"/>
</dbReference>
<dbReference type="Pfam" id="PF00175">
    <property type="entry name" value="NAD_binding_1"/>
    <property type="match status" value="1"/>
</dbReference>
<dbReference type="PIRSF" id="PIRSF000208">
    <property type="entry name" value="P450R"/>
    <property type="match status" value="1"/>
</dbReference>
<dbReference type="PRINTS" id="PR00369">
    <property type="entry name" value="FLAVODOXIN"/>
</dbReference>
<dbReference type="PRINTS" id="PR00371">
    <property type="entry name" value="FPNCR"/>
</dbReference>
<dbReference type="SUPFAM" id="SSF52343">
    <property type="entry name" value="Ferredoxin reductase-like, C-terminal NADP-linked domain"/>
    <property type="match status" value="1"/>
</dbReference>
<dbReference type="SUPFAM" id="SSF52218">
    <property type="entry name" value="Flavoproteins"/>
    <property type="match status" value="1"/>
</dbReference>
<dbReference type="SUPFAM" id="SSF63380">
    <property type="entry name" value="Riboflavin synthase domain-like"/>
    <property type="match status" value="1"/>
</dbReference>
<dbReference type="PROSITE" id="PS51384">
    <property type="entry name" value="FAD_FR"/>
    <property type="match status" value="1"/>
</dbReference>
<dbReference type="PROSITE" id="PS50902">
    <property type="entry name" value="FLAVODOXIN_LIKE"/>
    <property type="match status" value="1"/>
</dbReference>